<comment type="function">
    <text evidence="1 2">Key component of the cytosolic iron-sulfur protein assembly (CIA) complex, a multiprotein complex that mediates the incorporation of iron-sulfur cluster into extramitochondrial Fe/S proteins (By similarity). As a CIA complex component, interacts specifically with CIAO2A or CIAO2B and MMS19 to assist different branches of iron-sulfur protein assembly, depending of its interactors. The complex CIAO1:CIAO2B:MMS19 binds to and facilitates the assembly of most cytosolic-nuclear Fe/S proteins. CIAO1:CIAO2A specifically matures ACO1 and stabilizes IREB2 (By similarity). Seems to specifically modulate the transactivation activity of WT1. As part of the mitotic spindle-associated MMXD complex it may play a role in chromosome segregation (By similarity).</text>
</comment>
<comment type="subunit">
    <text evidence="1 2">Component of the CIA complex. Interacts with CIAO2A and forms a complex with CIAO2B and MMS19; the interactions with CIAO2A and CIAO2B are mutually exclusive. Interacts with CHD1L, ERCC2, IREB2 and POLD1. Component of the MMXD complex, which includes CIAO1, ERCC2, CIAO2B, MMS19 and SLC25A5. Interacts with WT1. Interacts with CIAO3. Interacts (via LYR motif) with HSC20.</text>
</comment>
<comment type="subcellular location">
    <subcellularLocation>
        <location evidence="1">Cytoplasm</location>
    </subcellularLocation>
</comment>
<comment type="similarity">
    <text evidence="2">Belongs to the WD repeat CIA1 family.</text>
</comment>
<name>CIAO1_RAT</name>
<feature type="chain" id="PRO_0000281107" description="Probable cytosolic iron-sulfur protein assembly protein CIAO1">
    <location>
        <begin position="1"/>
        <end position="339"/>
    </location>
</feature>
<feature type="repeat" description="WD 1">
    <location>
        <begin position="14"/>
        <end position="53"/>
    </location>
</feature>
<feature type="repeat" description="WD 2">
    <location>
        <begin position="59"/>
        <end position="98"/>
    </location>
</feature>
<feature type="repeat" description="WD 3">
    <location>
        <begin position="103"/>
        <end position="142"/>
    </location>
</feature>
<feature type="repeat" description="WD 4">
    <location>
        <begin position="148"/>
        <end position="187"/>
    </location>
</feature>
<feature type="repeat" description="WD 5">
    <location>
        <begin position="192"/>
        <end position="231"/>
    </location>
</feature>
<feature type="repeat" description="WD 6">
    <location>
        <begin position="250"/>
        <end position="289"/>
    </location>
</feature>
<feature type="repeat" description="WD 7">
    <location>
        <begin position="301"/>
        <end position="339"/>
    </location>
</feature>
<feature type="short sequence motif" description="LYR motif; required for interaction with HSC20" evidence="1">
    <location>
        <begin position="176"/>
        <end position="178"/>
    </location>
</feature>
<proteinExistence type="evidence at transcript level"/>
<organism>
    <name type="scientific">Rattus norvegicus</name>
    <name type="common">Rat</name>
    <dbReference type="NCBI Taxonomy" id="10116"/>
    <lineage>
        <taxon>Eukaryota</taxon>
        <taxon>Metazoa</taxon>
        <taxon>Chordata</taxon>
        <taxon>Craniata</taxon>
        <taxon>Vertebrata</taxon>
        <taxon>Euteleostomi</taxon>
        <taxon>Mammalia</taxon>
        <taxon>Eutheria</taxon>
        <taxon>Euarchontoglires</taxon>
        <taxon>Glires</taxon>
        <taxon>Rodentia</taxon>
        <taxon>Myomorpha</taxon>
        <taxon>Muroidea</taxon>
        <taxon>Muridae</taxon>
        <taxon>Murinae</taxon>
        <taxon>Rattus</taxon>
    </lineage>
</organism>
<accession>Q5M7T1</accession>
<reference key="1">
    <citation type="journal article" date="2004" name="Genome Res.">
        <title>The status, quality, and expansion of the NIH full-length cDNA project: the Mammalian Gene Collection (MGC).</title>
        <authorList>
            <consortium name="The MGC Project Team"/>
        </authorList>
    </citation>
    <scope>NUCLEOTIDE SEQUENCE [LARGE SCALE MRNA]</scope>
    <source>
        <tissue>Kidney</tissue>
    </source>
</reference>
<gene>
    <name evidence="2" type="primary">Ciao1</name>
    <name type="synonym">Wdr39</name>
</gene>
<sequence>MKDALVLQSRVPAHPDSRCWFLAWNPTGTLLASCGGDRKIRIWGTEGDSWICKSVLSEGHQRTVRKVAWSPCGNYLASASFDATTCIWKKNQDDFECVTTLEGHENEVKSVAWAPSGNLLATCSRDKSVWVWEVDEEDEYECVSVLNSHTQDVKHVVWHPSQELLASASYDDTVKLYQEEGDDWVCCATLEGHESTVWSIAFDPSGQRLASCSDDRTVRIWRQYLPGNEQGVACSGSDPSWKCVCTLSGFHTRTIYDVAWCQLTGALATACGDDAIRVFEEDPGSDPQQPTFSLTAHLRQAHSQDVNCVAWNPKEAGLLASCSDDGEVAFWEYHQPAGL</sequence>
<evidence type="ECO:0000250" key="1">
    <source>
        <dbReference type="UniProtKB" id="O76071"/>
    </source>
</evidence>
<evidence type="ECO:0000255" key="2">
    <source>
        <dbReference type="HAMAP-Rule" id="MF_03037"/>
    </source>
</evidence>
<dbReference type="EMBL" id="BC088474">
    <property type="protein sequence ID" value="AAH88474.1"/>
    <property type="molecule type" value="mRNA"/>
</dbReference>
<dbReference type="RefSeq" id="NP_001008766.1">
    <property type="nucleotide sequence ID" value="NM_001008766.1"/>
</dbReference>
<dbReference type="SMR" id="Q5M7T1"/>
<dbReference type="FunCoup" id="Q5M7T1">
    <property type="interactions" value="3873"/>
</dbReference>
<dbReference type="STRING" id="10116.ENSRNOP00000017603"/>
<dbReference type="PhosphoSitePlus" id="Q5M7T1"/>
<dbReference type="jPOST" id="Q5M7T1"/>
<dbReference type="PaxDb" id="10116-ENSRNOP00000017603"/>
<dbReference type="GeneID" id="29231"/>
<dbReference type="KEGG" id="rno:29231"/>
<dbReference type="UCSC" id="RGD:1307285">
    <property type="organism name" value="rat"/>
</dbReference>
<dbReference type="AGR" id="RGD:1307285"/>
<dbReference type="CTD" id="9391"/>
<dbReference type="RGD" id="1307285">
    <property type="gene designation" value="Ciao1"/>
</dbReference>
<dbReference type="VEuPathDB" id="HostDB:ENSRNOG00000012638"/>
<dbReference type="eggNOG" id="KOG0645">
    <property type="taxonomic scope" value="Eukaryota"/>
</dbReference>
<dbReference type="InParanoid" id="Q5M7T1"/>
<dbReference type="OrthoDB" id="284782at2759"/>
<dbReference type="PhylomeDB" id="Q5M7T1"/>
<dbReference type="TreeFam" id="TF318181"/>
<dbReference type="PRO" id="PR:Q5M7T1"/>
<dbReference type="Proteomes" id="UP000002494">
    <property type="component" value="Chromosome 3"/>
</dbReference>
<dbReference type="Bgee" id="ENSRNOG00000012638">
    <property type="expression patterns" value="Expressed in pancreas and 19 other cell types or tissues"/>
</dbReference>
<dbReference type="ExpressionAtlas" id="Q5M7T1">
    <property type="expression patterns" value="baseline and differential"/>
</dbReference>
<dbReference type="GO" id="GO:0005737">
    <property type="term" value="C:cytoplasm"/>
    <property type="evidence" value="ECO:0000250"/>
    <property type="project" value="UniProtKB"/>
</dbReference>
<dbReference type="GO" id="GO:0097361">
    <property type="term" value="C:cytosolic [4Fe-4S] assembly targeting complex"/>
    <property type="evidence" value="ECO:0000250"/>
    <property type="project" value="UniProtKB"/>
</dbReference>
<dbReference type="GO" id="GO:0071817">
    <property type="term" value="C:MMXD complex"/>
    <property type="evidence" value="ECO:0000250"/>
    <property type="project" value="UniProtKB"/>
</dbReference>
<dbReference type="GO" id="GO:0007059">
    <property type="term" value="P:chromosome segregation"/>
    <property type="evidence" value="ECO:0007669"/>
    <property type="project" value="UniProtKB-KW"/>
</dbReference>
<dbReference type="GO" id="GO:0016226">
    <property type="term" value="P:iron-sulfur cluster assembly"/>
    <property type="evidence" value="ECO:0000318"/>
    <property type="project" value="GO_Central"/>
</dbReference>
<dbReference type="GO" id="GO:0051604">
    <property type="term" value="P:protein maturation"/>
    <property type="evidence" value="ECO:0000250"/>
    <property type="project" value="UniProtKB"/>
</dbReference>
<dbReference type="CDD" id="cd00200">
    <property type="entry name" value="WD40"/>
    <property type="match status" value="1"/>
</dbReference>
<dbReference type="FunFam" id="2.130.10.10:FF:000136">
    <property type="entry name" value="Probable cytosolic iron-sulfur protein assembly protein CIAO1"/>
    <property type="match status" value="1"/>
</dbReference>
<dbReference type="Gene3D" id="2.130.10.10">
    <property type="entry name" value="YVTN repeat-like/Quinoprotein amine dehydrogenase"/>
    <property type="match status" value="1"/>
</dbReference>
<dbReference type="HAMAP" id="MF_03037">
    <property type="entry name" value="ciao1"/>
    <property type="match status" value="1"/>
</dbReference>
<dbReference type="InterPro" id="IPR028608">
    <property type="entry name" value="CIAO1/Cia1"/>
</dbReference>
<dbReference type="InterPro" id="IPR015943">
    <property type="entry name" value="WD40/YVTN_repeat-like_dom_sf"/>
</dbReference>
<dbReference type="InterPro" id="IPR019775">
    <property type="entry name" value="WD40_repeat_CS"/>
</dbReference>
<dbReference type="InterPro" id="IPR036322">
    <property type="entry name" value="WD40_repeat_dom_sf"/>
</dbReference>
<dbReference type="InterPro" id="IPR001680">
    <property type="entry name" value="WD40_rpt"/>
</dbReference>
<dbReference type="PANTHER" id="PTHR19920:SF0">
    <property type="entry name" value="CYTOSOLIC IRON-SULFUR PROTEIN ASSEMBLY PROTEIN CIAO1-RELATED"/>
    <property type="match status" value="1"/>
</dbReference>
<dbReference type="PANTHER" id="PTHR19920">
    <property type="entry name" value="WD40 PROTEIN CIAO1"/>
    <property type="match status" value="1"/>
</dbReference>
<dbReference type="Pfam" id="PF00400">
    <property type="entry name" value="WD40"/>
    <property type="match status" value="7"/>
</dbReference>
<dbReference type="SMART" id="SM00320">
    <property type="entry name" value="WD40"/>
    <property type="match status" value="7"/>
</dbReference>
<dbReference type="SUPFAM" id="SSF50978">
    <property type="entry name" value="WD40 repeat-like"/>
    <property type="match status" value="1"/>
</dbReference>
<dbReference type="PROSITE" id="PS00678">
    <property type="entry name" value="WD_REPEATS_1"/>
    <property type="match status" value="1"/>
</dbReference>
<dbReference type="PROSITE" id="PS50082">
    <property type="entry name" value="WD_REPEATS_2"/>
    <property type="match status" value="6"/>
</dbReference>
<dbReference type="PROSITE" id="PS50294">
    <property type="entry name" value="WD_REPEATS_REGION"/>
    <property type="match status" value="1"/>
</dbReference>
<protein>
    <recommendedName>
        <fullName evidence="2">Probable cytosolic iron-sulfur protein assembly protein CIAO1</fullName>
    </recommendedName>
    <alternativeName>
        <fullName evidence="2">WD repeat-containing protein 39</fullName>
    </alternativeName>
</protein>
<keyword id="KW-0159">Chromosome partition</keyword>
<keyword id="KW-0963">Cytoplasm</keyword>
<keyword id="KW-1185">Reference proteome</keyword>
<keyword id="KW-0677">Repeat</keyword>
<keyword id="KW-0853">WD repeat</keyword>